<accession>A1V7S8</accession>
<evidence type="ECO:0000255" key="1">
    <source>
        <dbReference type="HAMAP-Rule" id="MF_01261"/>
    </source>
</evidence>
<name>CCA_BURMS</name>
<reference key="1">
    <citation type="journal article" date="2010" name="Genome Biol. Evol.">
        <title>Continuing evolution of Burkholderia mallei through genome reduction and large-scale rearrangements.</title>
        <authorList>
            <person name="Losada L."/>
            <person name="Ronning C.M."/>
            <person name="DeShazer D."/>
            <person name="Woods D."/>
            <person name="Fedorova N."/>
            <person name="Kim H.S."/>
            <person name="Shabalina S.A."/>
            <person name="Pearson T.R."/>
            <person name="Brinkac L."/>
            <person name="Tan P."/>
            <person name="Nandi T."/>
            <person name="Crabtree J."/>
            <person name="Badger J."/>
            <person name="Beckstrom-Sternberg S."/>
            <person name="Saqib M."/>
            <person name="Schutzer S.E."/>
            <person name="Keim P."/>
            <person name="Nierman W.C."/>
        </authorList>
    </citation>
    <scope>NUCLEOTIDE SEQUENCE [LARGE SCALE GENOMIC DNA]</scope>
    <source>
        <strain>SAVP1</strain>
    </source>
</reference>
<keyword id="KW-0067">ATP-binding</keyword>
<keyword id="KW-0378">Hydrolase</keyword>
<keyword id="KW-0460">Magnesium</keyword>
<keyword id="KW-0479">Metal-binding</keyword>
<keyword id="KW-0511">Multifunctional enzyme</keyword>
<keyword id="KW-0533">Nickel</keyword>
<keyword id="KW-0547">Nucleotide-binding</keyword>
<keyword id="KW-0548">Nucleotidyltransferase</keyword>
<keyword id="KW-0692">RNA repair</keyword>
<keyword id="KW-0694">RNA-binding</keyword>
<keyword id="KW-0808">Transferase</keyword>
<keyword id="KW-0819">tRNA processing</keyword>
<gene>
    <name evidence="1" type="primary">cca</name>
    <name type="ordered locus">BMASAVP1_A2987</name>
</gene>
<dbReference type="EC" id="2.7.7.72" evidence="1"/>
<dbReference type="EC" id="3.1.3.-" evidence="1"/>
<dbReference type="EC" id="3.1.4.-" evidence="1"/>
<dbReference type="EMBL" id="CP000526">
    <property type="protein sequence ID" value="ABM51632.1"/>
    <property type="molecule type" value="Genomic_DNA"/>
</dbReference>
<dbReference type="RefSeq" id="WP_004197240.1">
    <property type="nucleotide sequence ID" value="NC_008785.1"/>
</dbReference>
<dbReference type="SMR" id="A1V7S8"/>
<dbReference type="KEGG" id="bmv:BMASAVP1_A2987"/>
<dbReference type="HOGENOM" id="CLU_015961_1_1_4"/>
<dbReference type="GO" id="GO:0005524">
    <property type="term" value="F:ATP binding"/>
    <property type="evidence" value="ECO:0007669"/>
    <property type="project" value="UniProtKB-UniRule"/>
</dbReference>
<dbReference type="GO" id="GO:0004810">
    <property type="term" value="F:CCA tRNA nucleotidyltransferase activity"/>
    <property type="evidence" value="ECO:0007669"/>
    <property type="project" value="UniProtKB-UniRule"/>
</dbReference>
<dbReference type="GO" id="GO:0004112">
    <property type="term" value="F:cyclic-nucleotide phosphodiesterase activity"/>
    <property type="evidence" value="ECO:0007669"/>
    <property type="project" value="UniProtKB-UniRule"/>
</dbReference>
<dbReference type="GO" id="GO:0000287">
    <property type="term" value="F:magnesium ion binding"/>
    <property type="evidence" value="ECO:0007669"/>
    <property type="project" value="UniProtKB-UniRule"/>
</dbReference>
<dbReference type="GO" id="GO:0016791">
    <property type="term" value="F:phosphatase activity"/>
    <property type="evidence" value="ECO:0007669"/>
    <property type="project" value="UniProtKB-UniRule"/>
</dbReference>
<dbReference type="GO" id="GO:0000049">
    <property type="term" value="F:tRNA binding"/>
    <property type="evidence" value="ECO:0007669"/>
    <property type="project" value="UniProtKB-UniRule"/>
</dbReference>
<dbReference type="GO" id="GO:0042245">
    <property type="term" value="P:RNA repair"/>
    <property type="evidence" value="ECO:0007669"/>
    <property type="project" value="UniProtKB-KW"/>
</dbReference>
<dbReference type="GO" id="GO:0001680">
    <property type="term" value="P:tRNA 3'-terminal CCA addition"/>
    <property type="evidence" value="ECO:0007669"/>
    <property type="project" value="UniProtKB-UniRule"/>
</dbReference>
<dbReference type="CDD" id="cd05398">
    <property type="entry name" value="NT_ClassII-CCAase"/>
    <property type="match status" value="1"/>
</dbReference>
<dbReference type="Gene3D" id="3.30.460.10">
    <property type="entry name" value="Beta Polymerase, domain 2"/>
    <property type="match status" value="1"/>
</dbReference>
<dbReference type="Gene3D" id="1.10.3090.10">
    <property type="entry name" value="cca-adding enzyme, domain 2"/>
    <property type="match status" value="1"/>
</dbReference>
<dbReference type="HAMAP" id="MF_01261">
    <property type="entry name" value="CCA_bact_type1"/>
    <property type="match status" value="1"/>
</dbReference>
<dbReference type="HAMAP" id="MF_01262">
    <property type="entry name" value="CCA_bact_type2"/>
    <property type="match status" value="1"/>
</dbReference>
<dbReference type="InterPro" id="IPR012006">
    <property type="entry name" value="CCA_bact"/>
</dbReference>
<dbReference type="InterPro" id="IPR006674">
    <property type="entry name" value="HD_domain"/>
</dbReference>
<dbReference type="InterPro" id="IPR043519">
    <property type="entry name" value="NT_sf"/>
</dbReference>
<dbReference type="InterPro" id="IPR002646">
    <property type="entry name" value="PolA_pol_head_dom"/>
</dbReference>
<dbReference type="InterPro" id="IPR032828">
    <property type="entry name" value="PolyA_RNA-bd"/>
</dbReference>
<dbReference type="InterPro" id="IPR050124">
    <property type="entry name" value="tRNA_CCA-adding_enzyme"/>
</dbReference>
<dbReference type="NCBIfam" id="NF008137">
    <property type="entry name" value="PRK10885.1"/>
    <property type="match status" value="1"/>
</dbReference>
<dbReference type="PANTHER" id="PTHR47545">
    <property type="entry name" value="MULTIFUNCTIONAL CCA PROTEIN"/>
    <property type="match status" value="1"/>
</dbReference>
<dbReference type="PANTHER" id="PTHR47545:SF1">
    <property type="entry name" value="MULTIFUNCTIONAL CCA PROTEIN"/>
    <property type="match status" value="1"/>
</dbReference>
<dbReference type="Pfam" id="PF01966">
    <property type="entry name" value="HD"/>
    <property type="match status" value="1"/>
</dbReference>
<dbReference type="Pfam" id="PF01743">
    <property type="entry name" value="PolyA_pol"/>
    <property type="match status" value="1"/>
</dbReference>
<dbReference type="Pfam" id="PF12627">
    <property type="entry name" value="PolyA_pol_RNAbd"/>
    <property type="match status" value="1"/>
</dbReference>
<dbReference type="PIRSF" id="PIRSF000813">
    <property type="entry name" value="CCA_bact"/>
    <property type="match status" value="1"/>
</dbReference>
<dbReference type="SUPFAM" id="SSF81301">
    <property type="entry name" value="Nucleotidyltransferase"/>
    <property type="match status" value="1"/>
</dbReference>
<dbReference type="SUPFAM" id="SSF81891">
    <property type="entry name" value="Poly A polymerase C-terminal region-like"/>
    <property type="match status" value="1"/>
</dbReference>
<dbReference type="PROSITE" id="PS51831">
    <property type="entry name" value="HD"/>
    <property type="match status" value="1"/>
</dbReference>
<proteinExistence type="inferred from homology"/>
<feature type="chain" id="PRO_1000054255" description="Multifunctional CCA protein">
    <location>
        <begin position="1"/>
        <end position="413"/>
    </location>
</feature>
<feature type="domain" description="HD" evidence="1">
    <location>
        <begin position="232"/>
        <end position="333"/>
    </location>
</feature>
<feature type="binding site" evidence="1">
    <location>
        <position position="8"/>
    </location>
    <ligand>
        <name>ATP</name>
        <dbReference type="ChEBI" id="CHEBI:30616"/>
    </ligand>
</feature>
<feature type="binding site" evidence="1">
    <location>
        <position position="8"/>
    </location>
    <ligand>
        <name>CTP</name>
        <dbReference type="ChEBI" id="CHEBI:37563"/>
    </ligand>
</feature>
<feature type="binding site" evidence="1">
    <location>
        <position position="11"/>
    </location>
    <ligand>
        <name>ATP</name>
        <dbReference type="ChEBI" id="CHEBI:30616"/>
    </ligand>
</feature>
<feature type="binding site" evidence="1">
    <location>
        <position position="11"/>
    </location>
    <ligand>
        <name>CTP</name>
        <dbReference type="ChEBI" id="CHEBI:37563"/>
    </ligand>
</feature>
<feature type="binding site" evidence="1">
    <location>
        <position position="21"/>
    </location>
    <ligand>
        <name>Mg(2+)</name>
        <dbReference type="ChEBI" id="CHEBI:18420"/>
    </ligand>
</feature>
<feature type="binding site" evidence="1">
    <location>
        <position position="23"/>
    </location>
    <ligand>
        <name>Mg(2+)</name>
        <dbReference type="ChEBI" id="CHEBI:18420"/>
    </ligand>
</feature>
<feature type="binding site" evidence="1">
    <location>
        <position position="91"/>
    </location>
    <ligand>
        <name>ATP</name>
        <dbReference type="ChEBI" id="CHEBI:30616"/>
    </ligand>
</feature>
<feature type="binding site" evidence="1">
    <location>
        <position position="91"/>
    </location>
    <ligand>
        <name>CTP</name>
        <dbReference type="ChEBI" id="CHEBI:37563"/>
    </ligand>
</feature>
<feature type="binding site" evidence="1">
    <location>
        <position position="143"/>
    </location>
    <ligand>
        <name>ATP</name>
        <dbReference type="ChEBI" id="CHEBI:30616"/>
    </ligand>
</feature>
<feature type="binding site" evidence="1">
    <location>
        <position position="143"/>
    </location>
    <ligand>
        <name>CTP</name>
        <dbReference type="ChEBI" id="CHEBI:37563"/>
    </ligand>
</feature>
<feature type="binding site" evidence="1">
    <location>
        <position position="146"/>
    </location>
    <ligand>
        <name>ATP</name>
        <dbReference type="ChEBI" id="CHEBI:30616"/>
    </ligand>
</feature>
<feature type="binding site" evidence="1">
    <location>
        <position position="146"/>
    </location>
    <ligand>
        <name>CTP</name>
        <dbReference type="ChEBI" id="CHEBI:37563"/>
    </ligand>
</feature>
<sequence length="413" mass="45113">MKIYAVGGAIRDALLGLPVRDRDYVVVGATPEQMAAQRFRPVGKDFPVFLHPDTHEEYALARTERKTAAGYHGFQFYYAPDVTLEQDLVRRDLTINAMAREVSPDGALVGPVVDPFGGQADLRAKLFRHVGDAFVEDPVRILRVARFAARFAEFAVAPDTAALMRAMVDAGEVDALVPERVWQELARGLMEAKPSRMFAVLRECGALARILPEIDALFGVPQRADYHPEVDTGVHVMMVIDHAAKQGYSLPVRFAALTHDLGKATTPADVLPRHIGHEGRSVDLLKPLCERLRVPNECRDLALVVAREHGNLHRVMEMGAAALVRLLERADALRKPARFAEALQASEADARGRLGLETKPYPQAERLRQALVAARAVDAGAIAQGLAGEPAKIKDAVHRARVRAVAQAVGVAD</sequence>
<organism>
    <name type="scientific">Burkholderia mallei (strain SAVP1)</name>
    <dbReference type="NCBI Taxonomy" id="320388"/>
    <lineage>
        <taxon>Bacteria</taxon>
        <taxon>Pseudomonadati</taxon>
        <taxon>Pseudomonadota</taxon>
        <taxon>Betaproteobacteria</taxon>
        <taxon>Burkholderiales</taxon>
        <taxon>Burkholderiaceae</taxon>
        <taxon>Burkholderia</taxon>
        <taxon>pseudomallei group</taxon>
    </lineage>
</organism>
<protein>
    <recommendedName>
        <fullName evidence="1">Multifunctional CCA protein</fullName>
    </recommendedName>
    <domain>
        <recommendedName>
            <fullName evidence="1">CCA-adding enzyme</fullName>
            <ecNumber evidence="1">2.7.7.72</ecNumber>
        </recommendedName>
        <alternativeName>
            <fullName evidence="1">CCA tRNA nucleotidyltransferase</fullName>
        </alternativeName>
        <alternativeName>
            <fullName evidence="1">tRNA CCA-pyrophosphorylase</fullName>
        </alternativeName>
        <alternativeName>
            <fullName evidence="1">tRNA adenylyl-/cytidylyl-transferase</fullName>
        </alternativeName>
        <alternativeName>
            <fullName evidence="1">tRNA nucleotidyltransferase</fullName>
        </alternativeName>
        <alternativeName>
            <fullName evidence="1">tRNA-NT</fullName>
        </alternativeName>
    </domain>
    <domain>
        <recommendedName>
            <fullName evidence="1">2'-nucleotidase</fullName>
            <ecNumber evidence="1">3.1.3.-</ecNumber>
        </recommendedName>
    </domain>
    <domain>
        <recommendedName>
            <fullName evidence="1">2',3'-cyclic phosphodiesterase</fullName>
            <ecNumber evidence="1">3.1.4.-</ecNumber>
        </recommendedName>
    </domain>
    <domain>
        <recommendedName>
            <fullName evidence="1">Phosphatase</fullName>
            <ecNumber evidence="1">3.1.3.-</ecNumber>
        </recommendedName>
    </domain>
</protein>
<comment type="function">
    <text evidence="1">Catalyzes the addition and repair of the essential 3'-terminal CCA sequence in tRNAs without using a nucleic acid template. Adds these three nucleotides in the order of C, C, and A to the tRNA nucleotide-73, using CTP and ATP as substrates and producing inorganic pyrophosphate. tRNA 3'-terminal CCA addition is required both for tRNA processing and repair. Also involved in tRNA surveillance by mediating tandem CCA addition to generate a CCACCA at the 3' terminus of unstable tRNAs. While stable tRNAs receive only 3'-terminal CCA, unstable tRNAs are marked with CCACCA and rapidly degraded.</text>
</comment>
<comment type="catalytic activity">
    <reaction evidence="1">
        <text>a tRNA precursor + 2 CTP + ATP = a tRNA with a 3' CCA end + 3 diphosphate</text>
        <dbReference type="Rhea" id="RHEA:14433"/>
        <dbReference type="Rhea" id="RHEA-COMP:10465"/>
        <dbReference type="Rhea" id="RHEA-COMP:10468"/>
        <dbReference type="ChEBI" id="CHEBI:30616"/>
        <dbReference type="ChEBI" id="CHEBI:33019"/>
        <dbReference type="ChEBI" id="CHEBI:37563"/>
        <dbReference type="ChEBI" id="CHEBI:74896"/>
        <dbReference type="ChEBI" id="CHEBI:83071"/>
        <dbReference type="EC" id="2.7.7.72"/>
    </reaction>
</comment>
<comment type="catalytic activity">
    <reaction evidence="1">
        <text>a tRNA with a 3' CCA end + 2 CTP + ATP = a tRNA with a 3' CCACCA end + 3 diphosphate</text>
        <dbReference type="Rhea" id="RHEA:76235"/>
        <dbReference type="Rhea" id="RHEA-COMP:10468"/>
        <dbReference type="Rhea" id="RHEA-COMP:18655"/>
        <dbReference type="ChEBI" id="CHEBI:30616"/>
        <dbReference type="ChEBI" id="CHEBI:33019"/>
        <dbReference type="ChEBI" id="CHEBI:37563"/>
        <dbReference type="ChEBI" id="CHEBI:83071"/>
        <dbReference type="ChEBI" id="CHEBI:195187"/>
    </reaction>
    <physiologicalReaction direction="left-to-right" evidence="1">
        <dbReference type="Rhea" id="RHEA:76236"/>
    </physiologicalReaction>
</comment>
<comment type="cofactor">
    <cofactor evidence="1">
        <name>Mg(2+)</name>
        <dbReference type="ChEBI" id="CHEBI:18420"/>
    </cofactor>
    <text evidence="1">Magnesium is required for nucleotidyltransferase activity.</text>
</comment>
<comment type="cofactor">
    <cofactor evidence="1">
        <name>Ni(2+)</name>
        <dbReference type="ChEBI" id="CHEBI:49786"/>
    </cofactor>
    <text evidence="1">Nickel for phosphatase activity.</text>
</comment>
<comment type="subunit">
    <text evidence="1">Monomer. Can also form homodimers and oligomers.</text>
</comment>
<comment type="domain">
    <text evidence="1">Comprises two domains: an N-terminal domain containing the nucleotidyltransferase activity and a C-terminal HD domain associated with both phosphodiesterase and phosphatase activities.</text>
</comment>
<comment type="miscellaneous">
    <text evidence="1">A single active site specifically recognizes both ATP and CTP and is responsible for their addition.</text>
</comment>
<comment type="similarity">
    <text evidence="1">Belongs to the tRNA nucleotidyltransferase/poly(A) polymerase family. Bacterial CCA-adding enzyme type 1 subfamily.</text>
</comment>